<reference key="1">
    <citation type="journal article" date="2008" name="Nature">
        <title>The genome of Laccaria bicolor provides insights into mycorrhizal symbiosis.</title>
        <authorList>
            <person name="Martin F."/>
            <person name="Aerts A."/>
            <person name="Ahren D."/>
            <person name="Brun A."/>
            <person name="Danchin E.G.J."/>
            <person name="Duchaussoy F."/>
            <person name="Gibon J."/>
            <person name="Kohler A."/>
            <person name="Lindquist E."/>
            <person name="Pereda V."/>
            <person name="Salamov A."/>
            <person name="Shapiro H.J."/>
            <person name="Wuyts J."/>
            <person name="Blaudez D."/>
            <person name="Buee M."/>
            <person name="Brokstein P."/>
            <person name="Canbaeck B."/>
            <person name="Cohen D."/>
            <person name="Courty P.E."/>
            <person name="Coutinho P.M."/>
            <person name="Delaruelle C."/>
            <person name="Detter J.C."/>
            <person name="Deveau A."/>
            <person name="DiFazio S."/>
            <person name="Duplessis S."/>
            <person name="Fraissinet-Tachet L."/>
            <person name="Lucic E."/>
            <person name="Frey-Klett P."/>
            <person name="Fourrey C."/>
            <person name="Feussner I."/>
            <person name="Gay G."/>
            <person name="Grimwood J."/>
            <person name="Hoegger P.J."/>
            <person name="Jain P."/>
            <person name="Kilaru S."/>
            <person name="Labbe J."/>
            <person name="Lin Y.C."/>
            <person name="Legue V."/>
            <person name="Le Tacon F."/>
            <person name="Marmeisse R."/>
            <person name="Melayah D."/>
            <person name="Montanini B."/>
            <person name="Muratet M."/>
            <person name="Nehls U."/>
            <person name="Niculita-Hirzel H."/>
            <person name="Oudot-Le Secq M.P."/>
            <person name="Peter M."/>
            <person name="Quesneville H."/>
            <person name="Rajashekar B."/>
            <person name="Reich M."/>
            <person name="Rouhier N."/>
            <person name="Schmutz J."/>
            <person name="Yin T."/>
            <person name="Chalot M."/>
            <person name="Henrissat B."/>
            <person name="Kuees U."/>
            <person name="Lucas S."/>
            <person name="Van de Peer Y."/>
            <person name="Podila G.K."/>
            <person name="Polle A."/>
            <person name="Pukkila P.J."/>
            <person name="Richardson P.M."/>
            <person name="Rouze P."/>
            <person name="Sanders I.R."/>
            <person name="Stajich J.E."/>
            <person name="Tunlid A."/>
            <person name="Tuskan G."/>
            <person name="Grigoriev I.V."/>
        </authorList>
    </citation>
    <scope>NUCLEOTIDE SEQUENCE [LARGE SCALE GENOMIC DNA]</scope>
    <source>
        <strain>S238N-H82 / ATCC MYA-4686</strain>
    </source>
</reference>
<evidence type="ECO:0000255" key="1">
    <source>
        <dbReference type="HAMAP-Rule" id="MF_03143"/>
    </source>
</evidence>
<protein>
    <recommendedName>
        <fullName evidence="1">Pentafunctional AROM polypeptide</fullName>
    </recommendedName>
    <domain>
        <recommendedName>
            <fullName evidence="1">3-dehydroquinate synthase</fullName>
            <shortName evidence="1">DHQS</shortName>
            <ecNumber evidence="1">4.2.3.4</ecNumber>
        </recommendedName>
    </domain>
    <domain>
        <recommendedName>
            <fullName evidence="1">3-phosphoshikimate 1-carboxyvinyltransferase</fullName>
            <ecNumber evidence="1">2.5.1.19</ecNumber>
        </recommendedName>
        <alternativeName>
            <fullName evidence="1">5-enolpyruvylshikimate-3-phosphate synthase</fullName>
            <shortName evidence="1">EPSP synthase</shortName>
            <shortName evidence="1">EPSPS</shortName>
        </alternativeName>
    </domain>
    <domain>
        <recommendedName>
            <fullName evidence="1">Shikimate kinase</fullName>
            <shortName evidence="1">SK</shortName>
            <ecNumber evidence="1">2.7.1.71</ecNumber>
        </recommendedName>
    </domain>
    <domain>
        <recommendedName>
            <fullName evidence="1">3-dehydroquinate dehydratase</fullName>
            <shortName evidence="1">3-dehydroquinase</shortName>
            <ecNumber evidence="1">4.2.1.10</ecNumber>
        </recommendedName>
    </domain>
    <domain>
        <recommendedName>
            <fullName evidence="1">Shikimate dehydrogenase</fullName>
            <ecNumber evidence="1">1.1.1.25</ecNumber>
        </recommendedName>
    </domain>
</protein>
<proteinExistence type="inferred from homology"/>
<accession>B0D6H2</accession>
<sequence length="1606" mass="174005">MANADVLKVSILGKESIHCGFHLIPYIAQTVLSNLPSSTYVLVTDTNVANFHLTAFEKEFEQRISSLPTSSTKPRFLSLVIPPGETSKSREGKANIEDFLLLHRCTRDSVILALGGGVIGDLVGFVAATFMRGVRFVQIPTTLLAMVDSSVGGKTAIDTPHGKNLIGAFWQPEYIFIDAAFLETLPSREFSNGMAEVVKTAAIWNEAEFISLESRSADIFAAIQTPSADYAGRSKQTRSIAQELLLSVIVGSISVKAHIVTIDERETGLRNLVNFGHTIGHAIEAVLTPTILHGECVSVGMILEGEISRQMGILSQVGVGRLNRCLKAYNLPVTLADPRIASLPAAKLLTVERLLDIMRIDKKNSGPEKKIVILSRIGATYEPKATVVPDSIIAKTLSEAAKVIPGVPRHHPVKMATPGSKSISNRALVLAALGKGTCRLKNLLHSDDTQVMMAALNELKGASFAWEDAGETLVVKGGEGSLSVPPKGKELYLGNAGTAARFLTTVCTLVQSSPQDNAEYTVITGNARMKQRPIGPLVTALQANGSKIDFLESEGCLPLAIAPQGLKGSQLQLAASVSSQYVSSILLCAPYAEEPITLELIGGQVISQPYIDMTVAMMKTFGVDVVRRKDPVTGKFLDVYEIPKAVYTNPPEYNIESDASSATYPLAIAAVTGTSCTIQNIGSASLQGDAKFAKEVLEKMGCQVSQTATETTVQGPPIGQLKAIEEVDMEVMTDAFLTATALAAVANGKTRIIGIANQRVKECNRIRAMIDELAKFGVETIELDDGLEIIGKPISDLKRGVSVHCYDDHRVAMAFSVLSTVVEGTIIEEKRCVEKTWPNWWDDLENKIGLTVQGVDLASVASEASASGTINHDSAASIILIGMRGTGKTFVGNLAAATLSWTCLDADAYFETKHEMGVREFVHQKGWQAFRDAEFEVLRELIAEKSQGHVISLGGGIVETPAARELLKEYAATKGPVVHIVRPIDEVIRYLNSEASRPAYDEAIVDVFRRREPWFGECCSHDFFNRFGDLPYSSPKATSREIARFFNHITGQRPNLAQNLTSGRRSYFLCLTYPDVTQSFPVIHELTQGVDAIELRVDLLRASKDYDSIEYSIPTLAYVSSQVAALRRVTSLPIVFTVRTQSQGGSFPDAAEKEAVELLKLALRLGVEYVDVEISLSEKKIKELVSLKGSSHMIASWHDWSGNMIWDGPVVKEKYDAAARFGDIIKIVGKANSIQDNFTLYNFVSKVNSTAGSKPFIAINMGLEGQMSRVLNSTLSPVSHPLLPSKAAPGQLSFKQIQNALHLLGLLPAQRFYLFGTPIAHSMSPTLHNTGFEILGLPHHYELLETKEVAEEIKIAIGDSAFGGASVTIPYKLDVIPLLDKLSPAAEAIGAVNTIIPRTTGSGRMLVGDNTDWLGIKACITEQLSSKPIHAALVIGAGGTARAAIYALSALNVGDIYLYNRTTSKAYELAHAFPHAPVHVLEQLGQWPNGAVPPCVIVSTVPASATTTEEETSGILLPSKLFDYRDGPAVVIDMAYKPAETPLLRLAKTAGDNWATVPGLEVLLEQGYVQFEMWTGRRCPKELVAKWLGRLTTDHKQFVFEEECES</sequence>
<dbReference type="EC" id="4.2.3.4" evidence="1"/>
<dbReference type="EC" id="2.5.1.19" evidence="1"/>
<dbReference type="EC" id="2.7.1.71" evidence="1"/>
<dbReference type="EC" id="4.2.1.10" evidence="1"/>
<dbReference type="EC" id="1.1.1.25" evidence="1"/>
<dbReference type="EMBL" id="DS547098">
    <property type="protein sequence ID" value="EDR10187.1"/>
    <property type="molecule type" value="Genomic_DNA"/>
</dbReference>
<dbReference type="RefSeq" id="XP_001879572.1">
    <property type="nucleotide sequence ID" value="XM_001879537.1"/>
</dbReference>
<dbReference type="SMR" id="B0D6H2"/>
<dbReference type="FunCoup" id="B0D6H2">
    <property type="interactions" value="112"/>
</dbReference>
<dbReference type="STRING" id="486041.B0D6H2"/>
<dbReference type="GeneID" id="6075154"/>
<dbReference type="KEGG" id="lbc:LACBIDRAFT_233717"/>
<dbReference type="HOGENOM" id="CLU_001201_1_2_1"/>
<dbReference type="InParanoid" id="B0D6H2"/>
<dbReference type="OrthoDB" id="197068at2759"/>
<dbReference type="UniPathway" id="UPA00053">
    <property type="reaction ID" value="UER00085"/>
</dbReference>
<dbReference type="UniPathway" id="UPA00053">
    <property type="reaction ID" value="UER00086"/>
</dbReference>
<dbReference type="UniPathway" id="UPA00053">
    <property type="reaction ID" value="UER00087"/>
</dbReference>
<dbReference type="UniPathway" id="UPA00053">
    <property type="reaction ID" value="UER00088"/>
</dbReference>
<dbReference type="UniPathway" id="UPA00053">
    <property type="reaction ID" value="UER00089"/>
</dbReference>
<dbReference type="Proteomes" id="UP000001194">
    <property type="component" value="Unassembled WGS sequence"/>
</dbReference>
<dbReference type="GO" id="GO:0005737">
    <property type="term" value="C:cytoplasm"/>
    <property type="evidence" value="ECO:0007669"/>
    <property type="project" value="UniProtKB-SubCell"/>
</dbReference>
<dbReference type="GO" id="GO:0003855">
    <property type="term" value="F:3-dehydroquinate dehydratase activity"/>
    <property type="evidence" value="ECO:0007669"/>
    <property type="project" value="UniProtKB-UniRule"/>
</dbReference>
<dbReference type="GO" id="GO:0003856">
    <property type="term" value="F:3-dehydroquinate synthase activity"/>
    <property type="evidence" value="ECO:0007669"/>
    <property type="project" value="UniProtKB-UniRule"/>
</dbReference>
<dbReference type="GO" id="GO:0003866">
    <property type="term" value="F:3-phosphoshikimate 1-carboxyvinyltransferase activity"/>
    <property type="evidence" value="ECO:0007669"/>
    <property type="project" value="UniProtKB-UniRule"/>
</dbReference>
<dbReference type="GO" id="GO:0005524">
    <property type="term" value="F:ATP binding"/>
    <property type="evidence" value="ECO:0007669"/>
    <property type="project" value="UniProtKB-UniRule"/>
</dbReference>
<dbReference type="GO" id="GO:0046872">
    <property type="term" value="F:metal ion binding"/>
    <property type="evidence" value="ECO:0007669"/>
    <property type="project" value="UniProtKB-UniRule"/>
</dbReference>
<dbReference type="GO" id="GO:0004764">
    <property type="term" value="F:shikimate 3-dehydrogenase (NADP+) activity"/>
    <property type="evidence" value="ECO:0007669"/>
    <property type="project" value="UniProtKB-UniRule"/>
</dbReference>
<dbReference type="GO" id="GO:0004765">
    <property type="term" value="F:shikimate kinase activity"/>
    <property type="evidence" value="ECO:0007669"/>
    <property type="project" value="UniProtKB-UniRule"/>
</dbReference>
<dbReference type="GO" id="GO:0008652">
    <property type="term" value="P:amino acid biosynthetic process"/>
    <property type="evidence" value="ECO:0007669"/>
    <property type="project" value="UniProtKB-KW"/>
</dbReference>
<dbReference type="GO" id="GO:0009073">
    <property type="term" value="P:aromatic amino acid family biosynthetic process"/>
    <property type="evidence" value="ECO:0007669"/>
    <property type="project" value="UniProtKB-UniRule"/>
</dbReference>
<dbReference type="GO" id="GO:0009423">
    <property type="term" value="P:chorismate biosynthetic process"/>
    <property type="evidence" value="ECO:0007669"/>
    <property type="project" value="UniProtKB-UniRule"/>
</dbReference>
<dbReference type="CDD" id="cd00502">
    <property type="entry name" value="DHQase_I"/>
    <property type="match status" value="1"/>
</dbReference>
<dbReference type="CDD" id="cd08195">
    <property type="entry name" value="DHQS"/>
    <property type="match status" value="1"/>
</dbReference>
<dbReference type="CDD" id="cd01556">
    <property type="entry name" value="EPSP_synthase"/>
    <property type="match status" value="1"/>
</dbReference>
<dbReference type="CDD" id="cd01065">
    <property type="entry name" value="NAD_bind_Shikimate_DH"/>
    <property type="match status" value="1"/>
</dbReference>
<dbReference type="CDD" id="cd00464">
    <property type="entry name" value="SK"/>
    <property type="match status" value="1"/>
</dbReference>
<dbReference type="FunFam" id="1.20.1090.10:FF:000007">
    <property type="entry name" value="Pentafunctional AROM polypeptide"/>
    <property type="match status" value="1"/>
</dbReference>
<dbReference type="FunFam" id="3.20.20.70:FF:000135">
    <property type="entry name" value="Pentafunctional AROM polypeptide"/>
    <property type="match status" value="1"/>
</dbReference>
<dbReference type="FunFam" id="3.40.50.1970:FF:000007">
    <property type="entry name" value="Pentafunctional AROM polypeptide"/>
    <property type="match status" value="1"/>
</dbReference>
<dbReference type="FunFam" id="3.40.50.300:FF:001256">
    <property type="entry name" value="Pentafunctional AROM polypeptide"/>
    <property type="match status" value="1"/>
</dbReference>
<dbReference type="FunFam" id="3.65.10.10:FF:000007">
    <property type="entry name" value="Pentafunctional AROM polypeptide"/>
    <property type="match status" value="1"/>
</dbReference>
<dbReference type="Gene3D" id="3.40.50.1970">
    <property type="match status" value="1"/>
</dbReference>
<dbReference type="Gene3D" id="3.20.20.70">
    <property type="entry name" value="Aldolase class I"/>
    <property type="match status" value="1"/>
</dbReference>
<dbReference type="Gene3D" id="1.20.1090.10">
    <property type="entry name" value="Dehydroquinate synthase-like - alpha domain"/>
    <property type="match status" value="1"/>
</dbReference>
<dbReference type="Gene3D" id="3.65.10.10">
    <property type="entry name" value="Enolpyruvate transferase domain"/>
    <property type="match status" value="2"/>
</dbReference>
<dbReference type="Gene3D" id="3.40.50.10860">
    <property type="entry name" value="Leucine Dehydrogenase, chain A, domain 1"/>
    <property type="match status" value="1"/>
</dbReference>
<dbReference type="Gene3D" id="3.40.50.720">
    <property type="entry name" value="NAD(P)-binding Rossmann-like Domain"/>
    <property type="match status" value="1"/>
</dbReference>
<dbReference type="Gene3D" id="3.40.50.300">
    <property type="entry name" value="P-loop containing nucleotide triphosphate hydrolases"/>
    <property type="match status" value="1"/>
</dbReference>
<dbReference type="HAMAP" id="MF_00210">
    <property type="entry name" value="EPSP_synth"/>
    <property type="match status" value="1"/>
</dbReference>
<dbReference type="HAMAP" id="MF_03143">
    <property type="entry name" value="Pentafunct_AroM"/>
    <property type="match status" value="1"/>
</dbReference>
<dbReference type="HAMAP" id="MF_00222">
    <property type="entry name" value="Shikimate_DH_AroE"/>
    <property type="match status" value="1"/>
</dbReference>
<dbReference type="HAMAP" id="MF_00109">
    <property type="entry name" value="Shikimate_kinase"/>
    <property type="match status" value="1"/>
</dbReference>
<dbReference type="InterPro" id="IPR013785">
    <property type="entry name" value="Aldolase_TIM"/>
</dbReference>
<dbReference type="InterPro" id="IPR046346">
    <property type="entry name" value="Aminoacid_DH-like_N_sf"/>
</dbReference>
<dbReference type="InterPro" id="IPR016037">
    <property type="entry name" value="DHQ_synth_AroB"/>
</dbReference>
<dbReference type="InterPro" id="IPR030960">
    <property type="entry name" value="DHQS/DOIS_N"/>
</dbReference>
<dbReference type="InterPro" id="IPR056179">
    <property type="entry name" value="DHQS_C"/>
</dbReference>
<dbReference type="InterPro" id="IPR001381">
    <property type="entry name" value="DHquinase_I"/>
</dbReference>
<dbReference type="InterPro" id="IPR001986">
    <property type="entry name" value="Enolpyruvate_Tfrase_dom"/>
</dbReference>
<dbReference type="InterPro" id="IPR036968">
    <property type="entry name" value="Enolpyruvate_Tfrase_sf"/>
</dbReference>
<dbReference type="InterPro" id="IPR006264">
    <property type="entry name" value="EPSP_synthase"/>
</dbReference>
<dbReference type="InterPro" id="IPR023193">
    <property type="entry name" value="EPSP_synthase_CS"/>
</dbReference>
<dbReference type="InterPro" id="IPR036291">
    <property type="entry name" value="NAD(P)-bd_dom_sf"/>
</dbReference>
<dbReference type="InterPro" id="IPR027417">
    <property type="entry name" value="P-loop_NTPase"/>
</dbReference>
<dbReference type="InterPro" id="IPR008289">
    <property type="entry name" value="Pentafunct_AroM"/>
</dbReference>
<dbReference type="InterPro" id="IPR013792">
    <property type="entry name" value="RNA3'P_cycl/enolpyr_Trfase_a/b"/>
</dbReference>
<dbReference type="InterPro" id="IPR041121">
    <property type="entry name" value="SDH_C"/>
</dbReference>
<dbReference type="InterPro" id="IPR031322">
    <property type="entry name" value="Shikimate/glucono_kinase"/>
</dbReference>
<dbReference type="InterPro" id="IPR013708">
    <property type="entry name" value="Shikimate_DH-bd_N"/>
</dbReference>
<dbReference type="InterPro" id="IPR010110">
    <property type="entry name" value="Shikimate_DH_AroM-type"/>
</dbReference>
<dbReference type="InterPro" id="IPR022893">
    <property type="entry name" value="Shikimate_DH_fam"/>
</dbReference>
<dbReference type="InterPro" id="IPR000623">
    <property type="entry name" value="Shikimate_kinase/TSH1"/>
</dbReference>
<dbReference type="InterPro" id="IPR023000">
    <property type="entry name" value="Shikimate_kinase_CS"/>
</dbReference>
<dbReference type="InterPro" id="IPR006151">
    <property type="entry name" value="Shikm_DH/Glu-tRNA_Rdtase"/>
</dbReference>
<dbReference type="NCBIfam" id="TIGR01356">
    <property type="entry name" value="aroA"/>
    <property type="match status" value="1"/>
</dbReference>
<dbReference type="NCBIfam" id="TIGR01357">
    <property type="entry name" value="aroB"/>
    <property type="match status" value="1"/>
</dbReference>
<dbReference type="NCBIfam" id="TIGR01093">
    <property type="entry name" value="aroD"/>
    <property type="match status" value="1"/>
</dbReference>
<dbReference type="NCBIfam" id="TIGR01809">
    <property type="entry name" value="Shik-DH-AROM"/>
    <property type="match status" value="1"/>
</dbReference>
<dbReference type="PANTHER" id="PTHR21090">
    <property type="entry name" value="AROM/DEHYDROQUINATE SYNTHASE"/>
    <property type="match status" value="1"/>
</dbReference>
<dbReference type="PANTHER" id="PTHR21090:SF5">
    <property type="entry name" value="PENTAFUNCTIONAL AROM POLYPEPTIDE"/>
    <property type="match status" value="1"/>
</dbReference>
<dbReference type="Pfam" id="PF01761">
    <property type="entry name" value="DHQ_synthase"/>
    <property type="match status" value="1"/>
</dbReference>
<dbReference type="Pfam" id="PF24621">
    <property type="entry name" value="DHQS_C"/>
    <property type="match status" value="1"/>
</dbReference>
<dbReference type="Pfam" id="PF01487">
    <property type="entry name" value="DHquinase_I"/>
    <property type="match status" value="1"/>
</dbReference>
<dbReference type="Pfam" id="PF00275">
    <property type="entry name" value="EPSP_synthase"/>
    <property type="match status" value="1"/>
</dbReference>
<dbReference type="Pfam" id="PF18317">
    <property type="entry name" value="SDH_C"/>
    <property type="match status" value="1"/>
</dbReference>
<dbReference type="Pfam" id="PF01488">
    <property type="entry name" value="Shikimate_DH"/>
    <property type="match status" value="1"/>
</dbReference>
<dbReference type="Pfam" id="PF08501">
    <property type="entry name" value="Shikimate_dh_N"/>
    <property type="match status" value="1"/>
</dbReference>
<dbReference type="Pfam" id="PF01202">
    <property type="entry name" value="SKI"/>
    <property type="match status" value="1"/>
</dbReference>
<dbReference type="PIRSF" id="PIRSF000514">
    <property type="entry name" value="Pentafunct_AroM"/>
    <property type="match status" value="1"/>
</dbReference>
<dbReference type="PRINTS" id="PR01100">
    <property type="entry name" value="SHIKIMTKNASE"/>
</dbReference>
<dbReference type="SUPFAM" id="SSF51569">
    <property type="entry name" value="Aldolase"/>
    <property type="match status" value="1"/>
</dbReference>
<dbReference type="SUPFAM" id="SSF53223">
    <property type="entry name" value="Aminoacid dehydrogenase-like, N-terminal domain"/>
    <property type="match status" value="1"/>
</dbReference>
<dbReference type="SUPFAM" id="SSF56796">
    <property type="entry name" value="Dehydroquinate synthase-like"/>
    <property type="match status" value="1"/>
</dbReference>
<dbReference type="SUPFAM" id="SSF55205">
    <property type="entry name" value="EPT/RTPC-like"/>
    <property type="match status" value="1"/>
</dbReference>
<dbReference type="SUPFAM" id="SSF51735">
    <property type="entry name" value="NAD(P)-binding Rossmann-fold domains"/>
    <property type="match status" value="1"/>
</dbReference>
<dbReference type="SUPFAM" id="SSF52540">
    <property type="entry name" value="P-loop containing nucleoside triphosphate hydrolases"/>
    <property type="match status" value="1"/>
</dbReference>
<dbReference type="PROSITE" id="PS00104">
    <property type="entry name" value="EPSP_SYNTHASE_1"/>
    <property type="match status" value="1"/>
</dbReference>
<dbReference type="PROSITE" id="PS00885">
    <property type="entry name" value="EPSP_SYNTHASE_2"/>
    <property type="match status" value="1"/>
</dbReference>
<dbReference type="PROSITE" id="PS01128">
    <property type="entry name" value="SHIKIMATE_KINASE"/>
    <property type="match status" value="1"/>
</dbReference>
<organism>
    <name type="scientific">Laccaria bicolor (strain S238N-H82 / ATCC MYA-4686)</name>
    <name type="common">Bicoloured deceiver</name>
    <name type="synonym">Laccaria laccata var. bicolor</name>
    <dbReference type="NCBI Taxonomy" id="486041"/>
    <lineage>
        <taxon>Eukaryota</taxon>
        <taxon>Fungi</taxon>
        <taxon>Dikarya</taxon>
        <taxon>Basidiomycota</taxon>
        <taxon>Agaricomycotina</taxon>
        <taxon>Agaricomycetes</taxon>
        <taxon>Agaricomycetidae</taxon>
        <taxon>Agaricales</taxon>
        <taxon>Agaricineae</taxon>
        <taxon>Hydnangiaceae</taxon>
        <taxon>Laccaria</taxon>
    </lineage>
</organism>
<comment type="function">
    <text evidence="1">The AROM polypeptide catalyzes 5 consecutive enzymatic reactions in prechorismate polyaromatic amino acid biosynthesis.</text>
</comment>
<comment type="catalytic activity">
    <reaction evidence="1">
        <text>7-phospho-2-dehydro-3-deoxy-D-arabino-heptonate = 3-dehydroquinate + phosphate</text>
        <dbReference type="Rhea" id="RHEA:21968"/>
        <dbReference type="ChEBI" id="CHEBI:32364"/>
        <dbReference type="ChEBI" id="CHEBI:43474"/>
        <dbReference type="ChEBI" id="CHEBI:58394"/>
        <dbReference type="EC" id="4.2.3.4"/>
    </reaction>
</comment>
<comment type="catalytic activity">
    <reaction evidence="1">
        <text>3-dehydroquinate = 3-dehydroshikimate + H2O</text>
        <dbReference type="Rhea" id="RHEA:21096"/>
        <dbReference type="ChEBI" id="CHEBI:15377"/>
        <dbReference type="ChEBI" id="CHEBI:16630"/>
        <dbReference type="ChEBI" id="CHEBI:32364"/>
        <dbReference type="EC" id="4.2.1.10"/>
    </reaction>
</comment>
<comment type="catalytic activity">
    <reaction evidence="1">
        <text>shikimate + NADP(+) = 3-dehydroshikimate + NADPH + H(+)</text>
        <dbReference type="Rhea" id="RHEA:17737"/>
        <dbReference type="ChEBI" id="CHEBI:15378"/>
        <dbReference type="ChEBI" id="CHEBI:16630"/>
        <dbReference type="ChEBI" id="CHEBI:36208"/>
        <dbReference type="ChEBI" id="CHEBI:57783"/>
        <dbReference type="ChEBI" id="CHEBI:58349"/>
        <dbReference type="EC" id="1.1.1.25"/>
    </reaction>
</comment>
<comment type="catalytic activity">
    <reaction evidence="1">
        <text>shikimate + ATP = 3-phosphoshikimate + ADP + H(+)</text>
        <dbReference type="Rhea" id="RHEA:13121"/>
        <dbReference type="ChEBI" id="CHEBI:15378"/>
        <dbReference type="ChEBI" id="CHEBI:30616"/>
        <dbReference type="ChEBI" id="CHEBI:36208"/>
        <dbReference type="ChEBI" id="CHEBI:145989"/>
        <dbReference type="ChEBI" id="CHEBI:456216"/>
        <dbReference type="EC" id="2.7.1.71"/>
    </reaction>
</comment>
<comment type="catalytic activity">
    <reaction evidence="1">
        <text>3-phosphoshikimate + phosphoenolpyruvate = 5-O-(1-carboxyvinyl)-3-phosphoshikimate + phosphate</text>
        <dbReference type="Rhea" id="RHEA:21256"/>
        <dbReference type="ChEBI" id="CHEBI:43474"/>
        <dbReference type="ChEBI" id="CHEBI:57701"/>
        <dbReference type="ChEBI" id="CHEBI:58702"/>
        <dbReference type="ChEBI" id="CHEBI:145989"/>
        <dbReference type="EC" id="2.5.1.19"/>
    </reaction>
</comment>
<comment type="cofactor">
    <cofactor>
        <name>Zn(2+)</name>
        <dbReference type="ChEBI" id="CHEBI:29105"/>
    </cofactor>
    <text>Binds 2 Zn(2+) ions per subunit.</text>
</comment>
<comment type="pathway">
    <text evidence="1">Metabolic intermediate biosynthesis; chorismate biosynthesis; chorismate from D-erythrose 4-phosphate and phosphoenolpyruvate: step 2/7.</text>
</comment>
<comment type="pathway">
    <text evidence="1">Metabolic intermediate biosynthesis; chorismate biosynthesis; chorismate from D-erythrose 4-phosphate and phosphoenolpyruvate: step 3/7.</text>
</comment>
<comment type="pathway">
    <text evidence="1">Metabolic intermediate biosynthesis; chorismate biosynthesis; chorismate from D-erythrose 4-phosphate and phosphoenolpyruvate: step 4/7.</text>
</comment>
<comment type="pathway">
    <text evidence="1">Metabolic intermediate biosynthesis; chorismate biosynthesis; chorismate from D-erythrose 4-phosphate and phosphoenolpyruvate: step 5/7.</text>
</comment>
<comment type="pathway">
    <text evidence="1">Metabolic intermediate biosynthesis; chorismate biosynthesis; chorismate from D-erythrose 4-phosphate and phosphoenolpyruvate: step 6/7.</text>
</comment>
<comment type="subunit">
    <text evidence="1">Homodimer.</text>
</comment>
<comment type="subcellular location">
    <subcellularLocation>
        <location evidence="1">Cytoplasm</location>
    </subcellularLocation>
</comment>
<comment type="similarity">
    <text evidence="1">In the N-terminal section; belongs to the sugar phosphate cyclases superfamily. Dehydroquinate synthase family.</text>
</comment>
<comment type="similarity">
    <text evidence="1">In the 2nd section; belongs to the EPSP synthase family.</text>
</comment>
<comment type="similarity">
    <text evidence="1">In the 3rd section; belongs to the shikimate kinase family.</text>
</comment>
<comment type="similarity">
    <text evidence="1">In the 4th section; belongs to the type-I 3-dehydroquinase family.</text>
</comment>
<comment type="similarity">
    <text evidence="1">In the C-terminal section; belongs to the shikimate dehydrogenase family.</text>
</comment>
<name>ARO1_LACBS</name>
<feature type="chain" id="PRO_0000406718" description="Pentafunctional AROM polypeptide">
    <location>
        <begin position="1"/>
        <end position="1606"/>
    </location>
</feature>
<feature type="region of interest" description="3-dehydroquinate synthase">
    <location>
        <begin position="1"/>
        <end position="390"/>
    </location>
</feature>
<feature type="region of interest" description="EPSP synthase">
    <location>
        <begin position="403"/>
        <end position="850"/>
    </location>
</feature>
<feature type="region of interest" description="Shikimate kinase">
    <location>
        <begin position="875"/>
        <end position="1070"/>
    </location>
</feature>
<feature type="region of interest" description="3-dehydroquinase">
    <location>
        <begin position="1071"/>
        <end position="1296"/>
    </location>
</feature>
<feature type="region of interest" description="Shikimate dehydrogenase">
    <location>
        <begin position="1309"/>
        <end position="1606"/>
    </location>
</feature>
<feature type="active site" description="Proton acceptor; for 3-dehydroquinate synthase activity" evidence="1">
    <location>
        <position position="266"/>
    </location>
</feature>
<feature type="active site" description="Proton acceptor; for 3-dehydroquinate synthase activity" evidence="1">
    <location>
        <position position="281"/>
    </location>
</feature>
<feature type="active site" description="For EPSP synthase activity" evidence="1">
    <location>
        <position position="832"/>
    </location>
</feature>
<feature type="active site" description="Proton acceptor; for 3-dehydroquinate dehydratase activity" evidence="1">
    <location>
        <position position="1198"/>
    </location>
</feature>
<feature type="active site" description="Schiff-base intermediate with substrate; for 3-dehydroquinate dehydratase activity" evidence="1">
    <location>
        <position position="1226"/>
    </location>
</feature>
<feature type="binding site" evidence="1">
    <location>
        <begin position="45"/>
        <end position="47"/>
    </location>
    <ligand>
        <name>NAD(+)</name>
        <dbReference type="ChEBI" id="CHEBI:57540"/>
    </ligand>
</feature>
<feature type="binding site" evidence="1">
    <location>
        <begin position="85"/>
        <end position="88"/>
    </location>
    <ligand>
        <name>NAD(+)</name>
        <dbReference type="ChEBI" id="CHEBI:57540"/>
    </ligand>
</feature>
<feature type="binding site" evidence="1">
    <location>
        <begin position="116"/>
        <end position="118"/>
    </location>
    <ligand>
        <name>NAD(+)</name>
        <dbReference type="ChEBI" id="CHEBI:57540"/>
    </ligand>
</feature>
<feature type="binding site" evidence="1">
    <location>
        <position position="121"/>
    </location>
    <ligand>
        <name>NAD(+)</name>
        <dbReference type="ChEBI" id="CHEBI:57540"/>
    </ligand>
</feature>
<feature type="binding site" evidence="1">
    <location>
        <position position="132"/>
    </location>
    <ligand>
        <name>7-phospho-2-dehydro-3-deoxy-D-arabino-heptonate</name>
        <dbReference type="ChEBI" id="CHEBI:58394"/>
    </ligand>
</feature>
<feature type="binding site" evidence="1">
    <location>
        <begin position="141"/>
        <end position="142"/>
    </location>
    <ligand>
        <name>NAD(+)</name>
        <dbReference type="ChEBI" id="CHEBI:57540"/>
    </ligand>
</feature>
<feature type="binding site" evidence="1">
    <location>
        <position position="148"/>
    </location>
    <ligand>
        <name>7-phospho-2-dehydro-3-deoxy-D-arabino-heptonate</name>
        <dbReference type="ChEBI" id="CHEBI:58394"/>
    </ligand>
</feature>
<feature type="binding site" evidence="1">
    <location>
        <position position="154"/>
    </location>
    <ligand>
        <name>7-phospho-2-dehydro-3-deoxy-D-arabino-heptonate</name>
        <dbReference type="ChEBI" id="CHEBI:58394"/>
    </ligand>
</feature>
<feature type="binding site" evidence="1">
    <location>
        <position position="163"/>
    </location>
    <ligand>
        <name>NAD(+)</name>
        <dbReference type="ChEBI" id="CHEBI:57540"/>
    </ligand>
</feature>
<feature type="binding site" evidence="1">
    <location>
        <position position="164"/>
    </location>
    <ligand>
        <name>7-phospho-2-dehydro-3-deoxy-D-arabino-heptonate</name>
        <dbReference type="ChEBI" id="CHEBI:58394"/>
    </ligand>
</feature>
<feature type="binding site" evidence="1">
    <location>
        <begin position="181"/>
        <end position="184"/>
    </location>
    <ligand>
        <name>NAD(+)</name>
        <dbReference type="ChEBI" id="CHEBI:57540"/>
    </ligand>
</feature>
<feature type="binding site" evidence="1">
    <location>
        <position position="192"/>
    </location>
    <ligand>
        <name>NAD(+)</name>
        <dbReference type="ChEBI" id="CHEBI:57540"/>
    </ligand>
</feature>
<feature type="binding site" evidence="1">
    <location>
        <begin position="196"/>
        <end position="199"/>
    </location>
    <ligand>
        <name>7-phospho-2-dehydro-3-deoxy-D-arabino-heptonate</name>
        <dbReference type="ChEBI" id="CHEBI:58394"/>
    </ligand>
</feature>
<feature type="binding site" evidence="1">
    <location>
        <position position="196"/>
    </location>
    <ligand>
        <name>Zn(2+)</name>
        <dbReference type="ChEBI" id="CHEBI:29105"/>
        <note>catalytic</note>
    </ligand>
</feature>
<feature type="binding site" evidence="1">
    <location>
        <position position="256"/>
    </location>
    <ligand>
        <name>7-phospho-2-dehydro-3-deoxy-D-arabino-heptonate</name>
        <dbReference type="ChEBI" id="CHEBI:58394"/>
    </ligand>
</feature>
<feature type="binding site" evidence="1">
    <location>
        <begin position="270"/>
        <end position="274"/>
    </location>
    <ligand>
        <name>7-phospho-2-dehydro-3-deoxy-D-arabino-heptonate</name>
        <dbReference type="ChEBI" id="CHEBI:58394"/>
    </ligand>
</feature>
<feature type="binding site" evidence="1">
    <location>
        <position position="277"/>
    </location>
    <ligand>
        <name>7-phospho-2-dehydro-3-deoxy-D-arabino-heptonate</name>
        <dbReference type="ChEBI" id="CHEBI:58394"/>
    </ligand>
</feature>
<feature type="binding site" evidence="1">
    <location>
        <position position="277"/>
    </location>
    <ligand>
        <name>Zn(2+)</name>
        <dbReference type="ChEBI" id="CHEBI:29105"/>
        <note>catalytic</note>
    </ligand>
</feature>
<feature type="binding site" evidence="1">
    <location>
        <position position="293"/>
    </location>
    <ligand>
        <name>7-phospho-2-dehydro-3-deoxy-D-arabino-heptonate</name>
        <dbReference type="ChEBI" id="CHEBI:58394"/>
    </ligand>
</feature>
<feature type="binding site" evidence="1">
    <location>
        <position position="293"/>
    </location>
    <ligand>
        <name>Zn(2+)</name>
        <dbReference type="ChEBI" id="CHEBI:29105"/>
        <note>catalytic</note>
    </ligand>
</feature>
<feature type="binding site" evidence="1">
    <location>
        <position position="362"/>
    </location>
    <ligand>
        <name>7-phospho-2-dehydro-3-deoxy-D-arabino-heptonate</name>
        <dbReference type="ChEBI" id="CHEBI:58394"/>
    </ligand>
</feature>
<feature type="binding site" evidence="1">
    <location>
        <begin position="882"/>
        <end position="889"/>
    </location>
    <ligand>
        <name>ATP</name>
        <dbReference type="ChEBI" id="CHEBI:30616"/>
    </ligand>
</feature>
<keyword id="KW-0028">Amino-acid biosynthesis</keyword>
<keyword id="KW-0057">Aromatic amino acid biosynthesis</keyword>
<keyword id="KW-0067">ATP-binding</keyword>
<keyword id="KW-0963">Cytoplasm</keyword>
<keyword id="KW-0418">Kinase</keyword>
<keyword id="KW-0456">Lyase</keyword>
<keyword id="KW-0479">Metal-binding</keyword>
<keyword id="KW-0511">Multifunctional enzyme</keyword>
<keyword id="KW-0521">NADP</keyword>
<keyword id="KW-0547">Nucleotide-binding</keyword>
<keyword id="KW-0560">Oxidoreductase</keyword>
<keyword id="KW-1185">Reference proteome</keyword>
<keyword id="KW-0808">Transferase</keyword>
<keyword id="KW-0862">Zinc</keyword>
<gene>
    <name type="ORF">LACBIDRAFT_233717</name>
</gene>